<accession>P41963</accession>
<evidence type="ECO:0000250" key="1"/>
<evidence type="ECO:0000255" key="2"/>
<evidence type="ECO:0000305" key="3"/>
<feature type="signal peptide" evidence="2">
    <location>
        <begin position="1"/>
        <end position="20"/>
    </location>
</feature>
<feature type="chain" id="PRO_0000032860" description="Extracellular superoxide dismutase [Cu-Zn]">
    <location>
        <begin position="21"/>
        <end position="199"/>
    </location>
</feature>
<feature type="binding site" evidence="1">
    <location>
        <position position="89"/>
    </location>
    <ligand>
        <name>Cu cation</name>
        <dbReference type="ChEBI" id="CHEBI:23378"/>
        <note>catalytic</note>
    </ligand>
</feature>
<feature type="binding site" evidence="1">
    <location>
        <position position="91"/>
    </location>
    <ligand>
        <name>Cu cation</name>
        <dbReference type="ChEBI" id="CHEBI:23378"/>
        <note>catalytic</note>
    </ligand>
</feature>
<feature type="binding site" evidence="1">
    <location>
        <position position="106"/>
    </location>
    <ligand>
        <name>Cu cation</name>
        <dbReference type="ChEBI" id="CHEBI:23378"/>
        <note>catalytic</note>
    </ligand>
</feature>
<feature type="binding site" evidence="1">
    <location>
        <position position="106"/>
    </location>
    <ligand>
        <name>Zn(2+)</name>
        <dbReference type="ChEBI" id="CHEBI:29105"/>
        <note>structural</note>
    </ligand>
</feature>
<feature type="binding site" evidence="1">
    <location>
        <position position="114"/>
    </location>
    <ligand>
        <name>Zn(2+)</name>
        <dbReference type="ChEBI" id="CHEBI:29105"/>
        <note>structural</note>
    </ligand>
</feature>
<feature type="binding site" evidence="1">
    <location>
        <position position="123"/>
    </location>
    <ligand>
        <name>Zn(2+)</name>
        <dbReference type="ChEBI" id="CHEBI:29105"/>
        <note>structural</note>
    </ligand>
</feature>
<feature type="binding site" evidence="1">
    <location>
        <position position="126"/>
    </location>
    <ligand>
        <name>Zn(2+)</name>
        <dbReference type="ChEBI" id="CHEBI:29105"/>
        <note>structural</note>
    </ligand>
</feature>
<feature type="binding site" evidence="1">
    <location>
        <position position="163"/>
    </location>
    <ligand>
        <name>Cu cation</name>
        <dbReference type="ChEBI" id="CHEBI:23378"/>
        <note>catalytic</note>
    </ligand>
</feature>
<feature type="glycosylation site" description="N-linked (GlcNAc...) asparagine" evidence="2">
    <location>
        <position position="33"/>
    </location>
</feature>
<feature type="glycosylation site" description="N-linked (GlcNAc...) asparagine" evidence="2">
    <location>
        <position position="60"/>
    </location>
</feature>
<feature type="glycosylation site" description="N-linked (GlcNAc...) asparagine" evidence="2">
    <location>
        <position position="70"/>
    </location>
</feature>
<feature type="glycosylation site" description="N-linked (GlcNAc...) asparagine" evidence="2">
    <location>
        <position position="111"/>
    </location>
</feature>
<feature type="disulfide bond" evidence="1">
    <location>
        <begin position="100"/>
        <end position="192"/>
    </location>
</feature>
<sequence length="199" mass="21255">MMIASFAIFLSHIIFITYATSNQRYFKPNMHNNMTITIRRTITKTATAIAVLHSDNGNINGTIHFQQDKNSTTISGEIKGLTPGLHGFHVHQYGDTTNGCISAGPHFNPYNKTHGDPTDEMRHVGDLGNIVAGADGTAHIDISDKHVQLLGPNSIIGRSLVVHADQDDLGKGVGDKKDESLKTGNAGGRVACGIVAISA</sequence>
<reference key="1">
    <citation type="journal article" date="1994" name="Infect. Immun.">
        <title>Extracellular and cytoplasmic CuZn superoxide dismutases from Brugia lymphatic filarial nematode parasites.</title>
        <authorList>
            <person name="Tang L."/>
            <person name="Ou X."/>
            <person name="Henkle K.J."/>
            <person name="Selkirk M.E."/>
        </authorList>
    </citation>
    <scope>NUCLEOTIDE SEQUENCE [MRNA]</scope>
</reference>
<name>SODE_BRUPA</name>
<keyword id="KW-0049">Antioxidant</keyword>
<keyword id="KW-0186">Copper</keyword>
<keyword id="KW-1015">Disulfide bond</keyword>
<keyword id="KW-0325">Glycoprotein</keyword>
<keyword id="KW-0479">Metal-binding</keyword>
<keyword id="KW-0560">Oxidoreductase</keyword>
<keyword id="KW-0964">Secreted</keyword>
<keyword id="KW-0732">Signal</keyword>
<keyword id="KW-0862">Zinc</keyword>
<comment type="function">
    <text>Protect the extracellular space from toxic effect of reactive oxygen intermediates by converting superoxide radicals into hydrogen peroxide and oxygen. May act in the parasite defense by neutralizing superoxide generated by activated leukocytes, thus acting as both an antioxidant and an anti-inflammatory factor.</text>
</comment>
<comment type="catalytic activity">
    <reaction>
        <text>2 superoxide + 2 H(+) = H2O2 + O2</text>
        <dbReference type="Rhea" id="RHEA:20696"/>
        <dbReference type="ChEBI" id="CHEBI:15378"/>
        <dbReference type="ChEBI" id="CHEBI:15379"/>
        <dbReference type="ChEBI" id="CHEBI:16240"/>
        <dbReference type="ChEBI" id="CHEBI:18421"/>
        <dbReference type="EC" id="1.15.1.1"/>
    </reaction>
</comment>
<comment type="cofactor">
    <cofactor evidence="1">
        <name>Cu cation</name>
        <dbReference type="ChEBI" id="CHEBI:23378"/>
    </cofactor>
    <text evidence="1">Binds 1 copper ion per subunit.</text>
</comment>
<comment type="cofactor">
    <cofactor evidence="1">
        <name>Zn(2+)</name>
        <dbReference type="ChEBI" id="CHEBI:29105"/>
    </cofactor>
    <text evidence="1">Binds 1 zinc ion per subunit.</text>
</comment>
<comment type="subunit">
    <text>Homodimer.</text>
</comment>
<comment type="subcellular location">
    <subcellularLocation>
        <location>Secreted</location>
        <location>Extracellular space</location>
    </subcellularLocation>
</comment>
<comment type="similarity">
    <text evidence="3">Belongs to the Cu-Zn superoxide dismutase family.</text>
</comment>
<protein>
    <recommendedName>
        <fullName>Extracellular superoxide dismutase [Cu-Zn]</fullName>
        <shortName>EC-SOD</shortName>
        <ecNumber>1.15.1.1</ecNumber>
    </recommendedName>
</protein>
<organism>
    <name type="scientific">Brugia pahangi</name>
    <name type="common">Filarial nematode worm</name>
    <dbReference type="NCBI Taxonomy" id="6280"/>
    <lineage>
        <taxon>Eukaryota</taxon>
        <taxon>Metazoa</taxon>
        <taxon>Ecdysozoa</taxon>
        <taxon>Nematoda</taxon>
        <taxon>Chromadorea</taxon>
        <taxon>Rhabditida</taxon>
        <taxon>Spirurina</taxon>
        <taxon>Spiruromorpha</taxon>
        <taxon>Filarioidea</taxon>
        <taxon>Onchocercidae</taxon>
        <taxon>Brugia</taxon>
    </lineage>
</organism>
<dbReference type="EC" id="1.15.1.1"/>
<dbReference type="EMBL" id="X76283">
    <property type="protein sequence ID" value="CAA53901.1"/>
    <property type="molecule type" value="mRNA"/>
</dbReference>
<dbReference type="SMR" id="P41963"/>
<dbReference type="STRING" id="6280.P41963"/>
<dbReference type="GO" id="GO:0005576">
    <property type="term" value="C:extracellular region"/>
    <property type="evidence" value="ECO:0007669"/>
    <property type="project" value="UniProtKB-SubCell"/>
</dbReference>
<dbReference type="GO" id="GO:0005507">
    <property type="term" value="F:copper ion binding"/>
    <property type="evidence" value="ECO:0007669"/>
    <property type="project" value="InterPro"/>
</dbReference>
<dbReference type="GO" id="GO:0004784">
    <property type="term" value="F:superoxide dismutase activity"/>
    <property type="evidence" value="ECO:0007669"/>
    <property type="project" value="UniProtKB-EC"/>
</dbReference>
<dbReference type="CDD" id="cd00305">
    <property type="entry name" value="Cu-Zn_Superoxide_Dismutase"/>
    <property type="match status" value="1"/>
</dbReference>
<dbReference type="FunFam" id="2.60.40.200:FF:000001">
    <property type="entry name" value="Superoxide dismutase [Cu-Zn]"/>
    <property type="match status" value="1"/>
</dbReference>
<dbReference type="Gene3D" id="2.60.40.200">
    <property type="entry name" value="Superoxide dismutase, copper/zinc binding domain"/>
    <property type="match status" value="1"/>
</dbReference>
<dbReference type="InterPro" id="IPR036423">
    <property type="entry name" value="SOD-like_Cu/Zn_dom_sf"/>
</dbReference>
<dbReference type="InterPro" id="IPR024134">
    <property type="entry name" value="SOD_Cu/Zn_/chaperone"/>
</dbReference>
<dbReference type="InterPro" id="IPR018152">
    <property type="entry name" value="SOD_Cu/Zn_BS"/>
</dbReference>
<dbReference type="InterPro" id="IPR001424">
    <property type="entry name" value="SOD_Cu_Zn_dom"/>
</dbReference>
<dbReference type="PANTHER" id="PTHR10003">
    <property type="entry name" value="SUPEROXIDE DISMUTASE CU-ZN -RELATED"/>
    <property type="match status" value="1"/>
</dbReference>
<dbReference type="Pfam" id="PF00080">
    <property type="entry name" value="Sod_Cu"/>
    <property type="match status" value="1"/>
</dbReference>
<dbReference type="PRINTS" id="PR00068">
    <property type="entry name" value="CUZNDISMTASE"/>
</dbReference>
<dbReference type="SUPFAM" id="SSF49329">
    <property type="entry name" value="Cu,Zn superoxide dismutase-like"/>
    <property type="match status" value="1"/>
</dbReference>
<dbReference type="PROSITE" id="PS00087">
    <property type="entry name" value="SOD_CU_ZN_1"/>
    <property type="match status" value="1"/>
</dbReference>
<dbReference type="PROSITE" id="PS00332">
    <property type="entry name" value="SOD_CU_ZN_2"/>
    <property type="match status" value="1"/>
</dbReference>
<proteinExistence type="evidence at transcript level"/>